<accession>B4K8J8</accession>
<evidence type="ECO:0000250" key="1">
    <source>
        <dbReference type="UniProtKB" id="Q9HBM1"/>
    </source>
</evidence>
<evidence type="ECO:0000250" key="2">
    <source>
        <dbReference type="UniProtKB" id="Q9V3V7"/>
    </source>
</evidence>
<evidence type="ECO:0000255" key="3"/>
<evidence type="ECO:0000312" key="4">
    <source>
        <dbReference type="EMBL" id="EDW14397.1"/>
    </source>
</evidence>
<sequence length="208" mass="23968">MRKRLMAMLQNDISLQQQENALAKQSAKFHSKIAAKHQLIKRQQRKLEKLNQVANERKEDQENRSAFEQSMRDKLLREQQNLSEMQTELATKKQRRDELMGFVRTMSEATNTYINLKALPARVKGVALRPEQGEWIPFNCDAYDLKGLNALWSRLNEPSASTDKWQQLFSAEPTAKEKENANASLSSIIEIDLTSPTAHRSLAKMLEK</sequence>
<dbReference type="EMBL" id="CH933806">
    <property type="protein sequence ID" value="EDW14397.1"/>
    <property type="molecule type" value="Genomic_DNA"/>
</dbReference>
<dbReference type="SMR" id="B4K8J8"/>
<dbReference type="FunCoup" id="B4K8J8">
    <property type="interactions" value="53"/>
</dbReference>
<dbReference type="EnsemblMetazoa" id="FBtr0174074">
    <property type="protein sequence ID" value="FBpp0172566"/>
    <property type="gene ID" value="FBgn0146076"/>
</dbReference>
<dbReference type="EnsemblMetazoa" id="XM_001998900.4">
    <property type="protein sequence ID" value="XP_001998936.2"/>
    <property type="gene ID" value="LOC6572830"/>
</dbReference>
<dbReference type="GeneID" id="6572830"/>
<dbReference type="eggNOG" id="ENOG502RVT8">
    <property type="taxonomic scope" value="Eukaryota"/>
</dbReference>
<dbReference type="HOGENOM" id="CLU_1246541_0_0_1"/>
<dbReference type="InParanoid" id="B4K8J8"/>
<dbReference type="OMA" id="NELMECM"/>
<dbReference type="OrthoDB" id="8006210at2759"/>
<dbReference type="PhylomeDB" id="B4K8J8"/>
<dbReference type="Proteomes" id="UP000009192">
    <property type="component" value="Unassembled WGS sequence"/>
</dbReference>
<dbReference type="GO" id="GO:0031262">
    <property type="term" value="C:Ndc80 complex"/>
    <property type="evidence" value="ECO:0000250"/>
    <property type="project" value="UniProtKB"/>
</dbReference>
<dbReference type="GO" id="GO:0005634">
    <property type="term" value="C:nucleus"/>
    <property type="evidence" value="ECO:0007669"/>
    <property type="project" value="UniProtKB-SubCell"/>
</dbReference>
<dbReference type="GO" id="GO:0051301">
    <property type="term" value="P:cell division"/>
    <property type="evidence" value="ECO:0007669"/>
    <property type="project" value="UniProtKB-KW"/>
</dbReference>
<dbReference type="GO" id="GO:0051311">
    <property type="term" value="P:meiotic metaphase chromosome alignment"/>
    <property type="evidence" value="ECO:0000250"/>
    <property type="project" value="UniProtKB"/>
</dbReference>
<dbReference type="GO" id="GO:0000212">
    <property type="term" value="P:meiotic spindle organization"/>
    <property type="evidence" value="ECO:0000250"/>
    <property type="project" value="UniProtKB"/>
</dbReference>
<dbReference type="GO" id="GO:0007080">
    <property type="term" value="P:mitotic metaphase chromosome alignment"/>
    <property type="evidence" value="ECO:0000250"/>
    <property type="project" value="UniProtKB"/>
</dbReference>
<feature type="chain" id="PRO_0000392421" description="Kinetochore protein Spc25">
    <location>
        <begin position="1"/>
        <end position="208"/>
    </location>
</feature>
<feature type="coiled-coil region" evidence="3">
    <location>
        <begin position="31"/>
        <end position="101"/>
    </location>
</feature>
<keyword id="KW-0131">Cell cycle</keyword>
<keyword id="KW-0132">Cell division</keyword>
<keyword id="KW-0137">Centromere</keyword>
<keyword id="KW-0158">Chromosome</keyword>
<keyword id="KW-0175">Coiled coil</keyword>
<keyword id="KW-0995">Kinetochore</keyword>
<keyword id="KW-0469">Meiosis</keyword>
<keyword id="KW-0498">Mitosis</keyword>
<keyword id="KW-0539">Nucleus</keyword>
<keyword id="KW-1185">Reference proteome</keyword>
<protein>
    <recommendedName>
        <fullName evidence="2">Kinetochore protein Spc25</fullName>
    </recommendedName>
</protein>
<reference evidence="4" key="1">
    <citation type="journal article" date="2007" name="Nature">
        <title>Evolution of genes and genomes on the Drosophila phylogeny.</title>
        <authorList>
            <consortium name="Drosophila 12 genomes consortium"/>
        </authorList>
    </citation>
    <scope>NUCLEOTIDE SEQUENCE [LARGE SCALE GENOMIC DNA]</scope>
    <source>
        <strain evidence="4">Tucson 15081-1352.22</strain>
    </source>
</reference>
<name>SPC25_DROMO</name>
<comment type="function">
    <text evidence="1 2">Acts as a component of the essential kinetochore-associated Ndc80 complex, which is required for chromosome segregation and spindle checkpoint activity during meiosis and mitosis. Required for kinetochore integrity and the organization of stable microtubule binding sites in the outer plate of the kinetochore. Participates in SAC signaling that responds specifically to disruptions in spindle microtubule dynamics. The NDC80 complex synergistically enhances the affinity of the SKA1 complex for microtubules and may allow the NDC80 complex to track depolymerizing microtubules.</text>
</comment>
<comment type="subunit">
    <text evidence="2">Component of the Ndc80 complex, which is composed of Ndc80, Nuf2 and Spc25.</text>
</comment>
<comment type="subcellular location">
    <subcellularLocation>
        <location evidence="2">Nucleus</location>
    </subcellularLocation>
    <subcellularLocation>
        <location evidence="2">Chromosome</location>
        <location evidence="2">Centromere</location>
        <location evidence="2">Kinetochore</location>
    </subcellularLocation>
</comment>
<comment type="similarity">
    <text evidence="3">Belongs to the SPC25 family.</text>
</comment>
<organism>
    <name type="scientific">Drosophila mojavensis</name>
    <name type="common">Fruit fly</name>
    <dbReference type="NCBI Taxonomy" id="7230"/>
    <lineage>
        <taxon>Eukaryota</taxon>
        <taxon>Metazoa</taxon>
        <taxon>Ecdysozoa</taxon>
        <taxon>Arthropoda</taxon>
        <taxon>Hexapoda</taxon>
        <taxon>Insecta</taxon>
        <taxon>Pterygota</taxon>
        <taxon>Neoptera</taxon>
        <taxon>Endopterygota</taxon>
        <taxon>Diptera</taxon>
        <taxon>Brachycera</taxon>
        <taxon>Muscomorpha</taxon>
        <taxon>Ephydroidea</taxon>
        <taxon>Drosophilidae</taxon>
        <taxon>Drosophila</taxon>
    </lineage>
</organism>
<proteinExistence type="inferred from homology"/>
<gene>
    <name evidence="2" type="primary">Spc25</name>
    <name type="ORF">GI23349</name>
</gene>